<organism>
    <name type="scientific">Homo sapiens</name>
    <name type="common">Human</name>
    <dbReference type="NCBI Taxonomy" id="9606"/>
    <lineage>
        <taxon>Eukaryota</taxon>
        <taxon>Metazoa</taxon>
        <taxon>Chordata</taxon>
        <taxon>Craniata</taxon>
        <taxon>Vertebrata</taxon>
        <taxon>Euteleostomi</taxon>
        <taxon>Mammalia</taxon>
        <taxon>Eutheria</taxon>
        <taxon>Euarchontoglires</taxon>
        <taxon>Primates</taxon>
        <taxon>Haplorrhini</taxon>
        <taxon>Catarrhini</taxon>
        <taxon>Hominidae</taxon>
        <taxon>Homo</taxon>
    </lineage>
</organism>
<comment type="function">
    <text evidence="1">May possess a function in tumorigenesis.</text>
</comment>
<comment type="subcellular location">
    <subcellularLocation>
        <location evidence="1">Nucleus</location>
    </subcellularLocation>
    <text evidence="1">When overexpressed.</text>
</comment>
<comment type="miscellaneous">
    <text evidence="1">Protein expressed at very low level.</text>
</comment>
<comment type="miscellaneous">
    <text>This Np9 protein is encoded by a human specific provirus.</text>
</comment>
<comment type="miscellaneous">
    <text>Has a type 1 genome. The HERV-K(HML-2) family contains type 1 and type 2 genomes depending on the absence or presence of 292 nucleotides at the 5'-end of the env gene. Np9 proteins are translated from a doubly spliced transcript expressed exclusively by HERV-K(HML-2) type 1 proviral genomes. Np9 proteins share 14 N-terminal amino acids with HERV-K(HML-2) type 2 envelope proteins. The rest of the protein is encoded by a small exon located at the 3' end of the envelope gene. This exon shares the same splice acceptor site and therefore overlaps HERV-K(HML-2) type 2 Rec protein second exon. It is yet translated from an alternate reading frame.</text>
</comment>
<comment type="miscellaneous">
    <text>Intragenic, in the sixth intron of the SCGD gene.</text>
</comment>
<name>NP10_HUMAN</name>
<keyword id="KW-0895">ERV</keyword>
<keyword id="KW-0539">Nucleus</keyword>
<keyword id="KW-1185">Reference proteome</keyword>
<keyword id="KW-0814">Transposable element</keyword>
<accession>P61580</accession>
<proteinExistence type="evidence at protein level"/>
<gene>
    <name type="primary">ERVK-10</name>
</gene>
<feature type="chain" id="PRO_0000186784" description="Endogenous retrovirus group K member 10 Np9 protein">
    <location>
        <begin position="1"/>
        <end position="75"/>
    </location>
</feature>
<feature type="region of interest" description="Disordered" evidence="2">
    <location>
        <begin position="21"/>
        <end position="43"/>
    </location>
</feature>
<feature type="compositionally biased region" description="Basic and acidic residues" evidence="2">
    <location>
        <begin position="32"/>
        <end position="43"/>
    </location>
</feature>
<sequence>MNPSEMQRKGPPRRWCLQVYPTAPKRQRPSRTGHDDDGGFVEKKRGKCGEKQERSNCYCVCVERSRHRRLHFVMC</sequence>
<dbReference type="EMBL" id="M14123">
    <property type="status" value="NOT_ANNOTATED_CDS"/>
    <property type="molecule type" value="Genomic_DNA"/>
</dbReference>
<dbReference type="BioMuta" id="HGNC:39004"/>
<dbReference type="MassIVE" id="P61580"/>
<dbReference type="PaxDb" id="9606-ENSP00000485075"/>
<dbReference type="GeneCards" id="ERVK-10"/>
<dbReference type="HGNC" id="HGNC:39004">
    <property type="gene designation" value="ERVK-10"/>
</dbReference>
<dbReference type="neXtProt" id="NX_P61580"/>
<dbReference type="eggNOG" id="ENOG502TK7B">
    <property type="taxonomic scope" value="Eukaryota"/>
</dbReference>
<dbReference type="PhylomeDB" id="P61580"/>
<dbReference type="Pharos" id="P61580">
    <property type="development level" value="Tdark"/>
</dbReference>
<dbReference type="Proteomes" id="UP000005640">
    <property type="component" value="Unplaced"/>
</dbReference>
<dbReference type="GO" id="GO:0005634">
    <property type="term" value="C:nucleus"/>
    <property type="evidence" value="ECO:0007669"/>
    <property type="project" value="UniProtKB-SubCell"/>
</dbReference>
<protein>
    <recommendedName>
        <fullName>Endogenous retrovirus group K member 10 Np9 protein</fullName>
    </recommendedName>
    <alternativeName>
        <fullName>HERV-K10 Np9 protein</fullName>
    </alternativeName>
    <alternativeName>
        <fullName>HERV-K107 Np9 protein</fullName>
    </alternativeName>
    <alternativeName>
        <fullName>HERV-K_5q33.3 provirus Np9 protein</fullName>
    </alternativeName>
</protein>
<evidence type="ECO:0000250" key="1"/>
<evidence type="ECO:0000256" key="2">
    <source>
        <dbReference type="SAM" id="MobiDB-lite"/>
    </source>
</evidence>
<reference key="1">
    <citation type="journal article" date="1986" name="J. Virol.">
        <title>Nucleotide sequence of human endogenous retrovirus genome related to the mouse mammary tumor virus genome.</title>
        <authorList>
            <person name="Ono M."/>
            <person name="Yasunaga T."/>
            <person name="Miyata T."/>
            <person name="Ushikubo H."/>
        </authorList>
    </citation>
    <scope>NUCLEOTIDE SEQUENCE [GENOMIC DNA]</scope>
</reference>
<reference key="2">
    <citation type="journal article" date="2002" name="Clin. Cancer Res.">
        <title>A novel gene from the human endogenous retrovirus K expressed in transformed cells.</title>
        <authorList>
            <person name="Armbruester V."/>
            <person name="Sauter M."/>
            <person name="Krautkraemer E."/>
            <person name="Meese E.U."/>
            <person name="Kleiman A."/>
            <person name="Best B."/>
            <person name="Roemer K."/>
            <person name="Mueller-Lantzsch N."/>
        </authorList>
    </citation>
    <scope>CHARACTERIZATION</scope>
</reference>